<gene>
    <name evidence="1" type="primary">rpmG</name>
    <name type="ordered locus">DNO_0061</name>
</gene>
<protein>
    <recommendedName>
        <fullName evidence="1">Large ribosomal subunit protein bL33</fullName>
    </recommendedName>
    <alternativeName>
        <fullName evidence="2">50S ribosomal protein L33</fullName>
    </alternativeName>
</protein>
<keyword id="KW-1185">Reference proteome</keyword>
<keyword id="KW-0687">Ribonucleoprotein</keyword>
<keyword id="KW-0689">Ribosomal protein</keyword>
<feature type="chain" id="PRO_1000059273" description="Large ribosomal subunit protein bL33">
    <location>
        <begin position="1"/>
        <end position="56"/>
    </location>
</feature>
<organism>
    <name type="scientific">Dichelobacter nodosus (strain VCS1703A)</name>
    <dbReference type="NCBI Taxonomy" id="246195"/>
    <lineage>
        <taxon>Bacteria</taxon>
        <taxon>Pseudomonadati</taxon>
        <taxon>Pseudomonadota</taxon>
        <taxon>Gammaproteobacteria</taxon>
        <taxon>Cardiobacteriales</taxon>
        <taxon>Cardiobacteriaceae</taxon>
        <taxon>Dichelobacter</taxon>
    </lineage>
</organism>
<dbReference type="EMBL" id="CP000513">
    <property type="protein sequence ID" value="ABQ14345.1"/>
    <property type="molecule type" value="Genomic_DNA"/>
</dbReference>
<dbReference type="RefSeq" id="WP_011927814.1">
    <property type="nucleotide sequence ID" value="NC_009446.1"/>
</dbReference>
<dbReference type="SMR" id="A5EWV9"/>
<dbReference type="STRING" id="246195.DNO_0061"/>
<dbReference type="KEGG" id="dno:DNO_0061"/>
<dbReference type="eggNOG" id="COG0267">
    <property type="taxonomic scope" value="Bacteria"/>
</dbReference>
<dbReference type="HOGENOM" id="CLU_190949_1_1_6"/>
<dbReference type="OrthoDB" id="21586at2"/>
<dbReference type="Proteomes" id="UP000000248">
    <property type="component" value="Chromosome"/>
</dbReference>
<dbReference type="GO" id="GO:0022625">
    <property type="term" value="C:cytosolic large ribosomal subunit"/>
    <property type="evidence" value="ECO:0007669"/>
    <property type="project" value="TreeGrafter"/>
</dbReference>
<dbReference type="GO" id="GO:0003735">
    <property type="term" value="F:structural constituent of ribosome"/>
    <property type="evidence" value="ECO:0007669"/>
    <property type="project" value="InterPro"/>
</dbReference>
<dbReference type="GO" id="GO:0006412">
    <property type="term" value="P:translation"/>
    <property type="evidence" value="ECO:0007669"/>
    <property type="project" value="UniProtKB-UniRule"/>
</dbReference>
<dbReference type="FunFam" id="2.20.28.120:FF:000001">
    <property type="entry name" value="50S ribosomal protein L33"/>
    <property type="match status" value="1"/>
</dbReference>
<dbReference type="Gene3D" id="2.20.28.120">
    <property type="entry name" value="Ribosomal protein L33"/>
    <property type="match status" value="1"/>
</dbReference>
<dbReference type="HAMAP" id="MF_00294">
    <property type="entry name" value="Ribosomal_bL33"/>
    <property type="match status" value="1"/>
</dbReference>
<dbReference type="InterPro" id="IPR001705">
    <property type="entry name" value="Ribosomal_bL33"/>
</dbReference>
<dbReference type="InterPro" id="IPR018264">
    <property type="entry name" value="Ribosomal_bL33_CS"/>
</dbReference>
<dbReference type="InterPro" id="IPR038584">
    <property type="entry name" value="Ribosomal_bL33_sf"/>
</dbReference>
<dbReference type="InterPro" id="IPR011332">
    <property type="entry name" value="Ribosomal_zn-bd"/>
</dbReference>
<dbReference type="NCBIfam" id="NF001860">
    <property type="entry name" value="PRK00595.1"/>
    <property type="match status" value="1"/>
</dbReference>
<dbReference type="NCBIfam" id="TIGR01023">
    <property type="entry name" value="rpmG_bact"/>
    <property type="match status" value="1"/>
</dbReference>
<dbReference type="PANTHER" id="PTHR15238">
    <property type="entry name" value="54S RIBOSOMAL PROTEIN L39, MITOCHONDRIAL"/>
    <property type="match status" value="1"/>
</dbReference>
<dbReference type="PANTHER" id="PTHR15238:SF1">
    <property type="entry name" value="LARGE RIBOSOMAL SUBUNIT PROTEIN BL33M"/>
    <property type="match status" value="1"/>
</dbReference>
<dbReference type="Pfam" id="PF00471">
    <property type="entry name" value="Ribosomal_L33"/>
    <property type="match status" value="1"/>
</dbReference>
<dbReference type="SUPFAM" id="SSF57829">
    <property type="entry name" value="Zn-binding ribosomal proteins"/>
    <property type="match status" value="1"/>
</dbReference>
<dbReference type="PROSITE" id="PS00582">
    <property type="entry name" value="RIBOSOMAL_L33"/>
    <property type="match status" value="1"/>
</dbReference>
<proteinExistence type="inferred from homology"/>
<evidence type="ECO:0000255" key="1">
    <source>
        <dbReference type="HAMAP-Rule" id="MF_00294"/>
    </source>
</evidence>
<evidence type="ECO:0000305" key="2"/>
<reference key="1">
    <citation type="journal article" date="2007" name="Nat. Biotechnol.">
        <title>Genome sequence and identification of candidate vaccine antigens from the animal pathogen Dichelobacter nodosus.</title>
        <authorList>
            <person name="Myers G.S.A."/>
            <person name="Parker D."/>
            <person name="Al-Hasani K."/>
            <person name="Kennan R.M."/>
            <person name="Seemann T."/>
            <person name="Ren Q."/>
            <person name="Badger J.H."/>
            <person name="Selengut J.D."/>
            <person name="Deboy R.T."/>
            <person name="Tettelin H."/>
            <person name="Boyce J.D."/>
            <person name="McCarl V.P."/>
            <person name="Han X."/>
            <person name="Nelson W.C."/>
            <person name="Madupu R."/>
            <person name="Mohamoud Y."/>
            <person name="Holley T."/>
            <person name="Fedorova N."/>
            <person name="Khouri H."/>
            <person name="Bottomley S.P."/>
            <person name="Whittington R.J."/>
            <person name="Adler B."/>
            <person name="Songer J.G."/>
            <person name="Rood J.I."/>
            <person name="Paulsen I.T."/>
        </authorList>
    </citation>
    <scope>NUCLEOTIDE SEQUENCE [LARGE SCALE GENOMIC DNA]</scope>
    <source>
        <strain>VCS1703A</strain>
    </source>
</reference>
<name>RL33_DICNV</name>
<comment type="similarity">
    <text evidence="1">Belongs to the bacterial ribosomal protein bL33 family.</text>
</comment>
<sequence>MAKKSVRELIRLVSSEGTGHFYTTTKNKRNTPEKMEVKKFDPVARKHCIYKEAKIK</sequence>
<accession>A5EWV9</accession>